<dbReference type="EC" id="2.3.1.180" evidence="1"/>
<dbReference type="EMBL" id="BA000038">
    <property type="protein sequence ID" value="BAC96932.1"/>
    <property type="molecule type" value="Genomic_DNA"/>
</dbReference>
<dbReference type="RefSeq" id="WP_011152213.1">
    <property type="nucleotide sequence ID" value="NC_005140.1"/>
</dbReference>
<dbReference type="SMR" id="Q7M7I3"/>
<dbReference type="STRING" id="672.VV93_v1c38490"/>
<dbReference type="KEGG" id="vvy:VVA0906"/>
<dbReference type="eggNOG" id="COG0332">
    <property type="taxonomic scope" value="Bacteria"/>
</dbReference>
<dbReference type="HOGENOM" id="CLU_039592_3_0_6"/>
<dbReference type="UniPathway" id="UPA00094"/>
<dbReference type="Proteomes" id="UP000002675">
    <property type="component" value="Chromosome II"/>
</dbReference>
<dbReference type="GO" id="GO:0005737">
    <property type="term" value="C:cytoplasm"/>
    <property type="evidence" value="ECO:0007669"/>
    <property type="project" value="UniProtKB-SubCell"/>
</dbReference>
<dbReference type="GO" id="GO:0004315">
    <property type="term" value="F:3-oxoacyl-[acyl-carrier-protein] synthase activity"/>
    <property type="evidence" value="ECO:0007669"/>
    <property type="project" value="InterPro"/>
</dbReference>
<dbReference type="GO" id="GO:0033818">
    <property type="term" value="F:beta-ketoacyl-acyl-carrier-protein synthase III activity"/>
    <property type="evidence" value="ECO:0007669"/>
    <property type="project" value="UniProtKB-UniRule"/>
</dbReference>
<dbReference type="GO" id="GO:0006633">
    <property type="term" value="P:fatty acid biosynthetic process"/>
    <property type="evidence" value="ECO:0007669"/>
    <property type="project" value="UniProtKB-UniRule"/>
</dbReference>
<dbReference type="CDD" id="cd00830">
    <property type="entry name" value="KAS_III"/>
    <property type="match status" value="1"/>
</dbReference>
<dbReference type="FunFam" id="3.40.47.10:FF:000004">
    <property type="entry name" value="3-oxoacyl-[acyl-carrier-protein] synthase 3"/>
    <property type="match status" value="1"/>
</dbReference>
<dbReference type="Gene3D" id="3.40.47.10">
    <property type="match status" value="1"/>
</dbReference>
<dbReference type="HAMAP" id="MF_01815">
    <property type="entry name" value="FabH"/>
    <property type="match status" value="1"/>
</dbReference>
<dbReference type="InterPro" id="IPR013747">
    <property type="entry name" value="ACP_syn_III_C"/>
</dbReference>
<dbReference type="InterPro" id="IPR013751">
    <property type="entry name" value="ACP_syn_III_N"/>
</dbReference>
<dbReference type="InterPro" id="IPR004655">
    <property type="entry name" value="FabH"/>
</dbReference>
<dbReference type="InterPro" id="IPR016039">
    <property type="entry name" value="Thiolase-like"/>
</dbReference>
<dbReference type="NCBIfam" id="TIGR00747">
    <property type="entry name" value="fabH"/>
    <property type="match status" value="1"/>
</dbReference>
<dbReference type="NCBIfam" id="NF006829">
    <property type="entry name" value="PRK09352.1"/>
    <property type="match status" value="1"/>
</dbReference>
<dbReference type="PANTHER" id="PTHR43091">
    <property type="entry name" value="3-OXOACYL-[ACYL-CARRIER-PROTEIN] SYNTHASE"/>
    <property type="match status" value="1"/>
</dbReference>
<dbReference type="PANTHER" id="PTHR43091:SF2">
    <property type="entry name" value="BETA-KETOACYL-[ACYL-CARRIER-PROTEIN] SYNTHASE III 2"/>
    <property type="match status" value="1"/>
</dbReference>
<dbReference type="Pfam" id="PF08545">
    <property type="entry name" value="ACP_syn_III"/>
    <property type="match status" value="1"/>
</dbReference>
<dbReference type="Pfam" id="PF08541">
    <property type="entry name" value="ACP_syn_III_C"/>
    <property type="match status" value="1"/>
</dbReference>
<dbReference type="SUPFAM" id="SSF53901">
    <property type="entry name" value="Thiolase-like"/>
    <property type="match status" value="1"/>
</dbReference>
<organism>
    <name type="scientific">Vibrio vulnificus (strain YJ016)</name>
    <dbReference type="NCBI Taxonomy" id="196600"/>
    <lineage>
        <taxon>Bacteria</taxon>
        <taxon>Pseudomonadati</taxon>
        <taxon>Pseudomonadota</taxon>
        <taxon>Gammaproteobacteria</taxon>
        <taxon>Vibrionales</taxon>
        <taxon>Vibrionaceae</taxon>
        <taxon>Vibrio</taxon>
    </lineage>
</organism>
<evidence type="ECO:0000255" key="1">
    <source>
        <dbReference type="HAMAP-Rule" id="MF_01815"/>
    </source>
</evidence>
<accession>Q7M7I3</accession>
<protein>
    <recommendedName>
        <fullName evidence="1">Beta-ketoacyl-[acyl-carrier-protein] synthase III 2</fullName>
        <shortName evidence="1">Beta-ketoacyl-ACP synthase III 2</shortName>
        <shortName evidence="1">KAS III 2</shortName>
        <ecNumber evidence="1">2.3.1.180</ecNumber>
    </recommendedName>
    <alternativeName>
        <fullName evidence="1">3-oxoacyl-[acyl-carrier-protein] synthase 3 2</fullName>
    </alternativeName>
    <alternativeName>
        <fullName evidence="1">3-oxoacyl-[acyl-carrier-protein] synthase III 2</fullName>
    </alternativeName>
</protein>
<name>FABH2_VIBVY</name>
<reference key="1">
    <citation type="journal article" date="2003" name="Genome Res.">
        <title>Comparative genome analysis of Vibrio vulnificus, a marine pathogen.</title>
        <authorList>
            <person name="Chen C.-Y."/>
            <person name="Wu K.-M."/>
            <person name="Chang Y.-C."/>
            <person name="Chang C.-H."/>
            <person name="Tsai H.-C."/>
            <person name="Liao T.-L."/>
            <person name="Liu Y.-M."/>
            <person name="Chen H.-J."/>
            <person name="Shen A.B.-T."/>
            <person name="Li J.-C."/>
            <person name="Su T.-L."/>
            <person name="Shao C.-P."/>
            <person name="Lee C.-T."/>
            <person name="Hor L.-I."/>
            <person name="Tsai S.-F."/>
        </authorList>
    </citation>
    <scope>NUCLEOTIDE SEQUENCE [LARGE SCALE GENOMIC DNA]</scope>
    <source>
        <strain>YJ016</strain>
    </source>
</reference>
<sequence length="362" mass="38754">MTNYYAEITGWGKCLPPAVLSNDDLSTFLDTSDEWIRTRTGIENRRISHVNTSDLATVAAKQALARAGITAQDIDLIIVATCSPDSLIPNIASMVQKNLEIEAAAAFDLNAACTGFVYGLETGTRLIQSGAYRHALIIGAERLSFYIDWAMRDTAVLFGDGAGAVVLSRTEEAVGLQNAKIGCDAQGRDILSVPKFGTSMDRFAADNGYWDFNFVGKEIFKRAVKGMGSAAAHVLAHAGMSKDDINVVIPHQANIRIIQTLCDLSGIDQSKAFVNIQKYGNTSAATVPIALCEAVEQGHIKAGDNILLAAFGAGLTWGAGLVKWGQRVEAISESDAALPECDKSALELLKNAIELCNARRDK</sequence>
<feature type="chain" id="PRO_0000110509" description="Beta-ketoacyl-[acyl-carrier-protein] synthase III 2">
    <location>
        <begin position="1"/>
        <end position="362"/>
    </location>
</feature>
<feature type="region of interest" description="ACP-binding" evidence="1">
    <location>
        <begin position="252"/>
        <end position="256"/>
    </location>
</feature>
<feature type="active site" evidence="1">
    <location>
        <position position="113"/>
    </location>
</feature>
<feature type="active site" evidence="1">
    <location>
        <position position="251"/>
    </location>
</feature>
<feature type="active site" evidence="1">
    <location>
        <position position="281"/>
    </location>
</feature>
<proteinExistence type="inferred from homology"/>
<comment type="function">
    <text evidence="1">Catalyzes the condensation reaction of fatty acid synthesis by the addition to an acyl acceptor of two carbons from malonyl-ACP. Catalyzes the first condensation reaction which initiates fatty acid synthesis and may therefore play a role in governing the total rate of fatty acid production. Possesses both acetoacetyl-ACP synthase and acetyl transacylase activities. Its substrate specificity determines the biosynthesis of branched-chain and/or straight-chain of fatty acids.</text>
</comment>
<comment type="catalytic activity">
    <reaction evidence="1">
        <text>malonyl-[ACP] + acetyl-CoA + H(+) = 3-oxobutanoyl-[ACP] + CO2 + CoA</text>
        <dbReference type="Rhea" id="RHEA:12080"/>
        <dbReference type="Rhea" id="RHEA-COMP:9623"/>
        <dbReference type="Rhea" id="RHEA-COMP:9625"/>
        <dbReference type="ChEBI" id="CHEBI:15378"/>
        <dbReference type="ChEBI" id="CHEBI:16526"/>
        <dbReference type="ChEBI" id="CHEBI:57287"/>
        <dbReference type="ChEBI" id="CHEBI:57288"/>
        <dbReference type="ChEBI" id="CHEBI:78449"/>
        <dbReference type="ChEBI" id="CHEBI:78450"/>
        <dbReference type="EC" id="2.3.1.180"/>
    </reaction>
</comment>
<comment type="pathway">
    <text evidence="1">Lipid metabolism; fatty acid biosynthesis.</text>
</comment>
<comment type="subunit">
    <text evidence="1">Homodimer.</text>
</comment>
<comment type="subcellular location">
    <subcellularLocation>
        <location evidence="1">Cytoplasm</location>
    </subcellularLocation>
</comment>
<comment type="domain">
    <text evidence="1">The last Arg residue of the ACP-binding site is essential for the weak association between ACP/AcpP and FabH.</text>
</comment>
<comment type="similarity">
    <text evidence="1">Belongs to the thiolase-like superfamily. FabH family.</text>
</comment>
<gene>
    <name evidence="1" type="primary">fabH2</name>
    <name type="ordered locus">VVA0906</name>
</gene>
<keyword id="KW-0012">Acyltransferase</keyword>
<keyword id="KW-0963">Cytoplasm</keyword>
<keyword id="KW-0275">Fatty acid biosynthesis</keyword>
<keyword id="KW-0276">Fatty acid metabolism</keyword>
<keyword id="KW-0444">Lipid biosynthesis</keyword>
<keyword id="KW-0443">Lipid metabolism</keyword>
<keyword id="KW-0511">Multifunctional enzyme</keyword>
<keyword id="KW-0808">Transferase</keyword>